<sequence>MSETLNQIKESFIEYLLFQYRFKSRIAVWVLNYIKVNEAKLANIHFVDTKINHHETLEIAEVGSHASAIQFTKRNIKLMNTNEIFDYIANHNCAFDIQIHFANVSKREQRLDDLIVAQLTESPSYQTYLHDLNSMAIDRHKHALLIDYLLHNIDLSLQMNEKQRFYQLTQILNTLKLVNKHNQFEDLADDD</sequence>
<proteinExistence type="inferred from homology"/>
<comment type="similarity">
    <text evidence="1">Belongs to the UPF0302 family.</text>
</comment>
<accession>A6U1T1</accession>
<protein>
    <recommendedName>
        <fullName evidence="1">UPF0302 protein SaurJH1_1550</fullName>
    </recommendedName>
</protein>
<dbReference type="EMBL" id="CP000736">
    <property type="protein sequence ID" value="ABR52399.1"/>
    <property type="molecule type" value="Genomic_DNA"/>
</dbReference>
<dbReference type="SMR" id="A6U1T1"/>
<dbReference type="KEGG" id="sah:SaurJH1_1550"/>
<dbReference type="HOGENOM" id="CLU_122408_0_0_9"/>
<dbReference type="Gene3D" id="3.40.1530.30">
    <property type="entry name" value="Uncharacterised family UPF0302, N-terminal domain"/>
    <property type="match status" value="1"/>
</dbReference>
<dbReference type="HAMAP" id="MF_00760">
    <property type="entry name" value="UPF0302"/>
    <property type="match status" value="1"/>
</dbReference>
<dbReference type="InterPro" id="IPR014957">
    <property type="entry name" value="IDEAL_dom"/>
</dbReference>
<dbReference type="InterPro" id="IPR011188">
    <property type="entry name" value="UPF0302"/>
</dbReference>
<dbReference type="InterPro" id="IPR014963">
    <property type="entry name" value="UPF0302_N"/>
</dbReference>
<dbReference type="InterPro" id="IPR038091">
    <property type="entry name" value="UPF0302_N_sf"/>
</dbReference>
<dbReference type="Pfam" id="PF08858">
    <property type="entry name" value="IDEAL"/>
    <property type="match status" value="1"/>
</dbReference>
<dbReference type="Pfam" id="PF08864">
    <property type="entry name" value="UPF0302"/>
    <property type="match status" value="1"/>
</dbReference>
<dbReference type="PIRSF" id="PIRSF007165">
    <property type="entry name" value="UCP007165"/>
    <property type="match status" value="1"/>
</dbReference>
<dbReference type="SMART" id="SM00914">
    <property type="entry name" value="IDEAL"/>
    <property type="match status" value="1"/>
</dbReference>
<evidence type="ECO:0000255" key="1">
    <source>
        <dbReference type="HAMAP-Rule" id="MF_00760"/>
    </source>
</evidence>
<name>Y1550_STAA2</name>
<feature type="chain" id="PRO_1000083525" description="UPF0302 protein SaurJH1_1550">
    <location>
        <begin position="1"/>
        <end position="191"/>
    </location>
</feature>
<organism>
    <name type="scientific">Staphylococcus aureus (strain JH1)</name>
    <dbReference type="NCBI Taxonomy" id="359787"/>
    <lineage>
        <taxon>Bacteria</taxon>
        <taxon>Bacillati</taxon>
        <taxon>Bacillota</taxon>
        <taxon>Bacilli</taxon>
        <taxon>Bacillales</taxon>
        <taxon>Staphylococcaceae</taxon>
        <taxon>Staphylococcus</taxon>
    </lineage>
</organism>
<gene>
    <name type="ordered locus">SaurJH1_1550</name>
</gene>
<reference key="1">
    <citation type="submission" date="2007-06" db="EMBL/GenBank/DDBJ databases">
        <title>Complete sequence of chromosome of Staphylococcus aureus subsp. aureus JH1.</title>
        <authorList>
            <consortium name="US DOE Joint Genome Institute"/>
            <person name="Copeland A."/>
            <person name="Lucas S."/>
            <person name="Lapidus A."/>
            <person name="Barry K."/>
            <person name="Detter J.C."/>
            <person name="Glavina del Rio T."/>
            <person name="Hammon N."/>
            <person name="Israni S."/>
            <person name="Dalin E."/>
            <person name="Tice H."/>
            <person name="Pitluck S."/>
            <person name="Chain P."/>
            <person name="Malfatti S."/>
            <person name="Shin M."/>
            <person name="Vergez L."/>
            <person name="Schmutz J."/>
            <person name="Larimer F."/>
            <person name="Land M."/>
            <person name="Hauser L."/>
            <person name="Kyrpides N."/>
            <person name="Ivanova N."/>
            <person name="Tomasz A."/>
            <person name="Richardson P."/>
        </authorList>
    </citation>
    <scope>NUCLEOTIDE SEQUENCE [LARGE SCALE GENOMIC DNA]</scope>
    <source>
        <strain>JH1</strain>
    </source>
</reference>